<gene>
    <name type="primary">mtl-2</name>
    <name type="synonym">met-2</name>
    <name type="ORF">T08G5.10</name>
</gene>
<reference key="1">
    <citation type="journal article" date="1990" name="J. Biol. Chem.">
        <title>Purification, characterization, and cDNA cloning of a novel metallothionein-like, cadmium-binding protein from Caenorhabditis elegans.</title>
        <authorList>
            <person name="Slice L.W."/>
            <person name="Freedman J.H."/>
            <person name="Rubin C.S."/>
        </authorList>
    </citation>
    <scope>NUCLEOTIDE SEQUENCE [MRNA]</scope>
</reference>
<reference key="2">
    <citation type="journal article" date="1990" name="Biochem. J.">
        <title>Characterization of metallothionein cDNAs induced by cadmium in the nematode Caenorhabditis elegans.</title>
        <authorList>
            <person name="Imagawa M."/>
            <person name="Onozawa T."/>
            <person name="Okumura K."/>
            <person name="Osada S."/>
            <person name="Nishihara T."/>
            <person name="Kondo M."/>
        </authorList>
    </citation>
    <scope>NUCLEOTIDE SEQUENCE [MRNA]</scope>
    <scope>PROTEIN SEQUENCE OF 2-15</scope>
    <source>
        <strain>Bristol N2</strain>
    </source>
</reference>
<reference key="3">
    <citation type="journal article" date="1993" name="J. Biol. Chem.">
        <title>The novel metallothionein genes of Caenorhabditis elegans. Structural organization and inducible, cell-specific expression.</title>
        <authorList>
            <person name="Freedman J.H."/>
            <person name="Slice L.W."/>
            <person name="Dixon D."/>
            <person name="Fire A."/>
            <person name="Rubin C.S."/>
        </authorList>
    </citation>
    <scope>NUCLEOTIDE SEQUENCE [GENOMIC DNA]</scope>
</reference>
<reference key="4">
    <citation type="journal article" date="1994" name="Biomed. Environ. Sci.">
        <title>Metallothionein genes in the nematode Caenorhabditis elegans and metal inducibility in mammalian culture cells.</title>
        <authorList>
            <person name="Kugawa F."/>
            <person name="Yamamoto H."/>
            <person name="Osada S."/>
            <person name="Aoki M."/>
            <person name="Imagawa M."/>
            <person name="Nishihara T."/>
        </authorList>
    </citation>
    <scope>NUCLEOTIDE SEQUENCE [GENOMIC DNA]</scope>
    <source>
        <strain>Bristol N2</strain>
    </source>
</reference>
<reference key="5">
    <citation type="journal article" date="1998" name="Science">
        <title>Genome sequence of the nematode C. elegans: a platform for investigating biology.</title>
        <authorList>
            <consortium name="The C. elegans sequencing consortium"/>
        </authorList>
    </citation>
    <scope>NUCLEOTIDE SEQUENCE [LARGE SCALE GENOMIC DNA]</scope>
    <source>
        <strain>Bristol N2</strain>
    </source>
</reference>
<accession>P17512</accession>
<comment type="function">
    <text>This protein binds cations of several transition elements.</text>
</comment>
<comment type="induction">
    <text>By cadmium.</text>
</comment>
<comment type="domain">
    <text>All cysteine residues are arranged in C-X-C groups. These are thought to be the metal-binding sites in other metallothioneins.</text>
</comment>
<comment type="similarity">
    <text evidence="2">Belongs to the metallothionein superfamily. Type 6 family.</text>
</comment>
<evidence type="ECO:0000269" key="1">
    <source>
    </source>
</evidence>
<evidence type="ECO:0000305" key="2"/>
<keyword id="KW-0002">3D-structure</keyword>
<keyword id="KW-0104">Cadmium</keyword>
<keyword id="KW-0903">Direct protein sequencing</keyword>
<keyword id="KW-0479">Metal-binding</keyword>
<keyword id="KW-0480">Metal-thiolate cluster</keyword>
<keyword id="KW-1185">Reference proteome</keyword>
<sequence length="63" mass="6594">MVCKCDCKNQNCSCNTGTKDCDCSDAKCCEQYCCPTASEKKCCKSGCAGGCKCANCECAQAAH</sequence>
<name>MT2_CAEEL</name>
<organism>
    <name type="scientific">Caenorhabditis elegans</name>
    <dbReference type="NCBI Taxonomy" id="6239"/>
    <lineage>
        <taxon>Eukaryota</taxon>
        <taxon>Metazoa</taxon>
        <taxon>Ecdysozoa</taxon>
        <taxon>Nematoda</taxon>
        <taxon>Chromadorea</taxon>
        <taxon>Rhabditida</taxon>
        <taxon>Rhabditina</taxon>
        <taxon>Rhabditomorpha</taxon>
        <taxon>Rhabditoidea</taxon>
        <taxon>Rhabditidae</taxon>
        <taxon>Peloderinae</taxon>
        <taxon>Caenorhabditis</taxon>
    </lineage>
</organism>
<protein>
    <recommendedName>
        <fullName>Metallothionein-2</fullName>
        <shortName>MT-2</shortName>
    </recommendedName>
    <alternativeName>
        <fullName>MT-Ce</fullName>
    </alternativeName>
    <alternativeName>
        <fullName>Metallothionein-II</fullName>
        <shortName>MT-II</shortName>
    </alternativeName>
    <alternativeName>
        <fullName>Metallothionein-like protein</fullName>
    </alternativeName>
</protein>
<dbReference type="EMBL" id="M32386">
    <property type="protein sequence ID" value="AAA28117.1"/>
    <property type="molecule type" value="mRNA"/>
</dbReference>
<dbReference type="EMBL" id="M32387">
    <property type="protein sequence ID" value="AAA28118.1"/>
    <property type="molecule type" value="mRNA"/>
</dbReference>
<dbReference type="EMBL" id="X53245">
    <property type="protein sequence ID" value="CAA37335.1"/>
    <property type="molecule type" value="mRNA"/>
</dbReference>
<dbReference type="EMBL" id="M92910">
    <property type="protein sequence ID" value="AAA28111.1"/>
    <property type="molecule type" value="Genomic_DNA"/>
</dbReference>
<dbReference type="EMBL" id="D17365">
    <property type="protein sequence ID" value="BAA04181.1"/>
    <property type="molecule type" value="Genomic_DNA"/>
</dbReference>
<dbReference type="EMBL" id="Z81589">
    <property type="protein sequence ID" value="CAB61028.1"/>
    <property type="molecule type" value="Genomic_DNA"/>
</dbReference>
<dbReference type="PIR" id="A45206">
    <property type="entry name" value="A34905"/>
</dbReference>
<dbReference type="RefSeq" id="NP_506482.1">
    <property type="nucleotide sequence ID" value="NM_074081.9"/>
</dbReference>
<dbReference type="PDB" id="8AP5">
    <property type="method" value="NMR"/>
    <property type="chains" value="A=1-63"/>
</dbReference>
<dbReference type="PDBsum" id="8AP5"/>
<dbReference type="SMR" id="P17512"/>
<dbReference type="BioGRID" id="44911">
    <property type="interactions" value="4"/>
</dbReference>
<dbReference type="FunCoup" id="P17512">
    <property type="interactions" value="147"/>
</dbReference>
<dbReference type="STRING" id="6239.T08G5.10.1"/>
<dbReference type="PaxDb" id="6239-T08G5.10"/>
<dbReference type="PeptideAtlas" id="P17512"/>
<dbReference type="EnsemblMetazoa" id="T08G5.10.1">
    <property type="protein sequence ID" value="T08G5.10.1"/>
    <property type="gene ID" value="WBGene00003474"/>
</dbReference>
<dbReference type="GeneID" id="179899"/>
<dbReference type="KEGG" id="cel:CELE_T08G5.10"/>
<dbReference type="UCSC" id="R05D3.11">
    <property type="organism name" value="c. elegans"/>
</dbReference>
<dbReference type="AGR" id="WB:WBGene00003474"/>
<dbReference type="CTD" id="179899"/>
<dbReference type="WormBase" id="T08G5.10">
    <property type="protein sequence ID" value="CE25109"/>
    <property type="gene ID" value="WBGene00003474"/>
    <property type="gene designation" value="mtl-2"/>
</dbReference>
<dbReference type="eggNOG" id="KOG4738">
    <property type="taxonomic scope" value="Eukaryota"/>
</dbReference>
<dbReference type="GeneTree" id="ENSGT00970000198152"/>
<dbReference type="HOGENOM" id="CLU_199958_0_0_1"/>
<dbReference type="InParanoid" id="P17512"/>
<dbReference type="OMA" id="CANCECA"/>
<dbReference type="OrthoDB" id="10435909at2759"/>
<dbReference type="PRO" id="PR:P17512"/>
<dbReference type="Proteomes" id="UP000001940">
    <property type="component" value="Chromosome V"/>
</dbReference>
<dbReference type="Bgee" id="WBGene00003474">
    <property type="expression patterns" value="Expressed in adult organism and 4 other cell types or tissues"/>
</dbReference>
<dbReference type="GO" id="GO:0046870">
    <property type="term" value="F:cadmium ion binding"/>
    <property type="evidence" value="ECO:0000314"/>
    <property type="project" value="WormBase"/>
</dbReference>
<dbReference type="GO" id="GO:0008270">
    <property type="term" value="F:zinc ion binding"/>
    <property type="evidence" value="ECO:0000314"/>
    <property type="project" value="WormBase"/>
</dbReference>
<dbReference type="GO" id="GO:0046686">
    <property type="term" value="P:response to cadmium ion"/>
    <property type="evidence" value="ECO:0000270"/>
    <property type="project" value="WormBase"/>
</dbReference>
<dbReference type="GO" id="GO:0009408">
    <property type="term" value="P:response to heat"/>
    <property type="evidence" value="ECO:0000270"/>
    <property type="project" value="WormBase"/>
</dbReference>
<dbReference type="InterPro" id="IPR000853">
    <property type="entry name" value="Metalthion_nemt"/>
</dbReference>
<dbReference type="PRINTS" id="PR00876">
    <property type="entry name" value="MTNEMATODE"/>
</dbReference>
<proteinExistence type="evidence at protein level"/>
<feature type="initiator methionine" description="Removed" evidence="1">
    <location>
        <position position="1"/>
    </location>
</feature>
<feature type="chain" id="PRO_0000197359" description="Metallothionein-2">
    <location>
        <begin position="2"/>
        <end position="63"/>
    </location>
</feature>